<dbReference type="EC" id="1.15.1.1" evidence="3"/>
<dbReference type="EMBL" id="AY195841">
    <property type="protein sequence ID" value="AAO40743.1"/>
    <property type="molecule type" value="mRNA"/>
</dbReference>
<dbReference type="EMBL" id="AY176061">
    <property type="protein sequence ID" value="AAN75577.1"/>
    <property type="molecule type" value="Genomic_DNA"/>
</dbReference>
<dbReference type="EMBL" id="AY822477">
    <property type="protein sequence ID" value="AAV69024.1"/>
    <property type="molecule type" value="mRNA"/>
</dbReference>
<dbReference type="SMR" id="Q8J0N2"/>
<dbReference type="VEuPathDB" id="FungiDB:A9K55_005579"/>
<dbReference type="VEuPathDB" id="FungiDB:CCM_03403"/>
<dbReference type="BRENDA" id="1.15.1.1">
    <property type="organism ID" value="1615"/>
</dbReference>
<dbReference type="GO" id="GO:0005737">
    <property type="term" value="C:cytoplasm"/>
    <property type="evidence" value="ECO:0007669"/>
    <property type="project" value="UniProtKB-SubCell"/>
</dbReference>
<dbReference type="GO" id="GO:0005507">
    <property type="term" value="F:copper ion binding"/>
    <property type="evidence" value="ECO:0007669"/>
    <property type="project" value="InterPro"/>
</dbReference>
<dbReference type="GO" id="GO:0004784">
    <property type="term" value="F:superoxide dismutase activity"/>
    <property type="evidence" value="ECO:0007669"/>
    <property type="project" value="UniProtKB-EC"/>
</dbReference>
<dbReference type="CDD" id="cd00305">
    <property type="entry name" value="Cu-Zn_Superoxide_Dismutase"/>
    <property type="match status" value="1"/>
</dbReference>
<dbReference type="FunFam" id="2.60.40.200:FF:000001">
    <property type="entry name" value="Superoxide dismutase [Cu-Zn]"/>
    <property type="match status" value="1"/>
</dbReference>
<dbReference type="Gene3D" id="2.60.40.200">
    <property type="entry name" value="Superoxide dismutase, copper/zinc binding domain"/>
    <property type="match status" value="1"/>
</dbReference>
<dbReference type="InterPro" id="IPR036423">
    <property type="entry name" value="SOD-like_Cu/Zn_dom_sf"/>
</dbReference>
<dbReference type="InterPro" id="IPR024134">
    <property type="entry name" value="SOD_Cu/Zn_/chaperone"/>
</dbReference>
<dbReference type="InterPro" id="IPR018152">
    <property type="entry name" value="SOD_Cu/Zn_BS"/>
</dbReference>
<dbReference type="InterPro" id="IPR001424">
    <property type="entry name" value="SOD_Cu_Zn_dom"/>
</dbReference>
<dbReference type="PANTHER" id="PTHR10003">
    <property type="entry name" value="SUPEROXIDE DISMUTASE CU-ZN -RELATED"/>
    <property type="match status" value="1"/>
</dbReference>
<dbReference type="Pfam" id="PF00080">
    <property type="entry name" value="Sod_Cu"/>
    <property type="match status" value="1"/>
</dbReference>
<dbReference type="PRINTS" id="PR00068">
    <property type="entry name" value="CUZNDISMTASE"/>
</dbReference>
<dbReference type="SUPFAM" id="SSF49329">
    <property type="entry name" value="Cu,Zn superoxide dismutase-like"/>
    <property type="match status" value="1"/>
</dbReference>
<dbReference type="PROSITE" id="PS00087">
    <property type="entry name" value="SOD_CU_ZN_1"/>
    <property type="match status" value="1"/>
</dbReference>
<dbReference type="PROSITE" id="PS00332">
    <property type="entry name" value="SOD_CU_ZN_2"/>
    <property type="match status" value="1"/>
</dbReference>
<reference key="1">
    <citation type="submission" date="2002-12" db="EMBL/GenBank/DDBJ databases">
        <title>Cordyceps sinensis copper-zinc superoxide dismutase complete cDNA.</title>
        <authorList>
            <person name="Qin F."/>
            <person name="Yu J."/>
            <person name="Cai Z."/>
        </authorList>
    </citation>
    <scope>NUCLEOTIDE SEQUENCE [MRNA]</scope>
</reference>
<reference key="2">
    <citation type="submission" date="2003-10" db="EMBL/GenBank/DDBJ databases">
        <title>Comparison of gene structure of the Cu,Zn superoxide dismutase (SOD1) from Cordyceps militaris, Paecillomyces tenuipes and P. sinensis.</title>
        <authorList>
            <person name="Park N.S."/>
            <person name="Lee S.M."/>
            <person name="Jin B.R."/>
            <person name="Sohn H.D."/>
        </authorList>
    </citation>
    <scope>NUCLEOTIDE SEQUENCE [GENOMIC DNA]</scope>
</reference>
<reference key="3">
    <citation type="submission" date="2004-11" db="EMBL/GenBank/DDBJ databases">
        <title>cDNA cloning, sequences and expression of Cu,Zn-SOD from Cordyceps militaris in E. coli.</title>
        <authorList>
            <person name="Wang Z.-S."/>
            <person name="Shen Q."/>
            <person name="Li S.-X."/>
            <person name="Yuan Q.-S."/>
        </authorList>
    </citation>
    <scope>NUCLEOTIDE SEQUENCE [MRNA]</scope>
    <source>
        <strain>SH</strain>
    </source>
</reference>
<sequence>MVKAVCVLRGDAKVAGTVTFEQESESAPTTITWDITGNDPNAERGFHIHTFGDNTNGCTSAGPHFNPHGKTHGAPTDAARHVGDLGNIKTDGQGNAKGSVQDSHVKLIGPHSVVGRTVVVHGGTDDLGKGGNEESLKTGNAGPRPACGVIGVAN</sequence>
<protein>
    <recommendedName>
        <fullName>Superoxide dismutase [Cu-Zn]</fullName>
        <ecNumber evidence="3">1.15.1.1</ecNumber>
    </recommendedName>
</protein>
<evidence type="ECO:0000250" key="1">
    <source>
        <dbReference type="UniProtKB" id="P00442"/>
    </source>
</evidence>
<evidence type="ECO:0000250" key="2">
    <source>
        <dbReference type="UniProtKB" id="P00445"/>
    </source>
</evidence>
<evidence type="ECO:0000250" key="3">
    <source>
        <dbReference type="UniProtKB" id="P85978"/>
    </source>
</evidence>
<evidence type="ECO:0000256" key="4">
    <source>
        <dbReference type="SAM" id="MobiDB-lite"/>
    </source>
</evidence>
<evidence type="ECO:0000305" key="5"/>
<organism>
    <name type="scientific">Cordyceps militaris</name>
    <name type="common">Caterpillar fungus</name>
    <name type="synonym">Clavaria militaris</name>
    <dbReference type="NCBI Taxonomy" id="73501"/>
    <lineage>
        <taxon>Eukaryota</taxon>
        <taxon>Fungi</taxon>
        <taxon>Dikarya</taxon>
        <taxon>Ascomycota</taxon>
        <taxon>Pezizomycotina</taxon>
        <taxon>Sordariomycetes</taxon>
        <taxon>Hypocreomycetidae</taxon>
        <taxon>Hypocreales</taxon>
        <taxon>Cordycipitaceae</taxon>
        <taxon>Cordyceps</taxon>
    </lineage>
</organism>
<name>SODC_CORMI</name>
<feature type="initiator methionine" description="Removed" evidence="2">
    <location>
        <position position="1"/>
    </location>
</feature>
<feature type="chain" id="PRO_0000164116" description="Superoxide dismutase [Cu-Zn]">
    <location>
        <begin position="2"/>
        <end position="154"/>
    </location>
</feature>
<feature type="region of interest" description="Disordered" evidence="4">
    <location>
        <begin position="122"/>
        <end position="143"/>
    </location>
</feature>
<feature type="compositionally biased region" description="Basic and acidic residues" evidence="4">
    <location>
        <begin position="123"/>
        <end position="136"/>
    </location>
</feature>
<feature type="binding site" evidence="2">
    <location>
        <position position="47"/>
    </location>
    <ligand>
        <name>Cu cation</name>
        <dbReference type="ChEBI" id="CHEBI:23378"/>
        <note>catalytic</note>
    </ligand>
</feature>
<feature type="binding site" evidence="2">
    <location>
        <position position="49"/>
    </location>
    <ligand>
        <name>Cu cation</name>
        <dbReference type="ChEBI" id="CHEBI:23378"/>
        <note>catalytic</note>
    </ligand>
</feature>
<feature type="binding site" evidence="2">
    <location>
        <position position="64"/>
    </location>
    <ligand>
        <name>Cu cation</name>
        <dbReference type="ChEBI" id="CHEBI:23378"/>
        <note>catalytic</note>
    </ligand>
</feature>
<feature type="binding site" evidence="2">
    <location>
        <position position="64"/>
    </location>
    <ligand>
        <name>Zn(2+)</name>
        <dbReference type="ChEBI" id="CHEBI:29105"/>
        <note>structural</note>
    </ligand>
</feature>
<feature type="binding site" evidence="2">
    <location>
        <position position="72"/>
    </location>
    <ligand>
        <name>Zn(2+)</name>
        <dbReference type="ChEBI" id="CHEBI:29105"/>
        <note>structural</note>
    </ligand>
</feature>
<feature type="binding site" evidence="2">
    <location>
        <position position="81"/>
    </location>
    <ligand>
        <name>Zn(2+)</name>
        <dbReference type="ChEBI" id="CHEBI:29105"/>
        <note>structural</note>
    </ligand>
</feature>
<feature type="binding site" evidence="2">
    <location>
        <position position="84"/>
    </location>
    <ligand>
        <name>Zn(2+)</name>
        <dbReference type="ChEBI" id="CHEBI:29105"/>
        <note>structural</note>
    </ligand>
</feature>
<feature type="binding site" evidence="2">
    <location>
        <position position="121"/>
    </location>
    <ligand>
        <name>Cu cation</name>
        <dbReference type="ChEBI" id="CHEBI:23378"/>
        <note>catalytic</note>
    </ligand>
</feature>
<feature type="binding site" evidence="2">
    <location>
        <position position="144"/>
    </location>
    <ligand>
        <name>substrate</name>
    </ligand>
</feature>
<feature type="disulfide bond" evidence="2">
    <location>
        <begin position="58"/>
        <end position="147"/>
    </location>
</feature>
<keyword id="KW-0049">Antioxidant</keyword>
<keyword id="KW-0186">Copper</keyword>
<keyword id="KW-0963">Cytoplasm</keyword>
<keyword id="KW-1015">Disulfide bond</keyword>
<keyword id="KW-0479">Metal-binding</keyword>
<keyword id="KW-0560">Oxidoreductase</keyword>
<keyword id="KW-0862">Zinc</keyword>
<accession>Q8J0N2</accession>
<accession>Q5PXP0</accession>
<accession>Q875I6</accession>
<comment type="function">
    <text evidence="1">Destroys radicals which are normally produced within the cells and which are toxic to biological systems.</text>
</comment>
<comment type="catalytic activity">
    <reaction evidence="3">
        <text>2 superoxide + 2 H(+) = H2O2 + O2</text>
        <dbReference type="Rhea" id="RHEA:20696"/>
        <dbReference type="ChEBI" id="CHEBI:15378"/>
        <dbReference type="ChEBI" id="CHEBI:15379"/>
        <dbReference type="ChEBI" id="CHEBI:16240"/>
        <dbReference type="ChEBI" id="CHEBI:18421"/>
        <dbReference type="EC" id="1.15.1.1"/>
    </reaction>
</comment>
<comment type="cofactor">
    <cofactor evidence="2">
        <name>Cu cation</name>
        <dbReference type="ChEBI" id="CHEBI:23378"/>
    </cofactor>
    <text evidence="2">Binds 1 copper ion per subunit.</text>
</comment>
<comment type="cofactor">
    <cofactor evidence="2">
        <name>Zn(2+)</name>
        <dbReference type="ChEBI" id="CHEBI:29105"/>
    </cofactor>
    <text evidence="2">Binds 1 zinc ion per subunit.</text>
</comment>
<comment type="subunit">
    <text evidence="3">Homodimer.</text>
</comment>
<comment type="subcellular location">
    <subcellularLocation>
        <location evidence="2">Cytoplasm</location>
    </subcellularLocation>
</comment>
<comment type="similarity">
    <text evidence="5">Belongs to the Cu-Zn superoxide dismutase family.</text>
</comment>
<gene>
    <name type="primary">SOD1</name>
</gene>
<proteinExistence type="evidence at transcript level"/>